<evidence type="ECO:0000250" key="1"/>
<evidence type="ECO:0000250" key="2">
    <source>
        <dbReference type="UniProtKB" id="P40043"/>
    </source>
</evidence>
<evidence type="ECO:0000305" key="3"/>
<accession>B3LRI4</accession>
<name>RGI1_YEAS1</name>
<sequence length="161" mass="18989">MTKKDKKEVKVQTVTTEDGETVKVFEDLQGFETFIANETEDDDFDHLHCKLNYYPPFVLHESHEDPEKISDAANSHSKKFVRHLHQHIEKHLLKDIKQAVRKPELKFHEKSKEETFDKITWHYGEETEYHGRPFKIDVQVVCTHEDAMVFVDYKTHPVGAN</sequence>
<keyword id="KW-1003">Cell membrane</keyword>
<keyword id="KW-1017">Isopeptide bond</keyword>
<keyword id="KW-0472">Membrane</keyword>
<keyword id="KW-0832">Ubl conjugation</keyword>
<reference key="1">
    <citation type="submission" date="2005-03" db="EMBL/GenBank/DDBJ databases">
        <title>Annotation of the Saccharomyces cerevisiae RM11-1a genome.</title>
        <authorList>
            <consortium name="The Broad Institute Genome Sequencing Platform"/>
            <person name="Birren B.W."/>
            <person name="Lander E.S."/>
            <person name="Galagan J.E."/>
            <person name="Nusbaum C."/>
            <person name="Devon K."/>
            <person name="Cuomo C."/>
            <person name="Jaffe D.B."/>
            <person name="Butler J."/>
            <person name="Alvarez P."/>
            <person name="Gnerre S."/>
            <person name="Grabherr M."/>
            <person name="Kleber M."/>
            <person name="Mauceli E.W."/>
            <person name="Brockman W."/>
            <person name="MacCallum I.A."/>
            <person name="Rounsley S."/>
            <person name="Young S.K."/>
            <person name="LaButti K."/>
            <person name="Pushparaj V."/>
            <person name="DeCaprio D."/>
            <person name="Crawford M."/>
            <person name="Koehrsen M."/>
            <person name="Engels R."/>
            <person name="Montgomery P."/>
            <person name="Pearson M."/>
            <person name="Howarth C."/>
            <person name="Larson L."/>
            <person name="Luoma S."/>
            <person name="White J."/>
            <person name="O'Leary S."/>
            <person name="Kodira C.D."/>
            <person name="Zeng Q."/>
            <person name="Yandava C."/>
            <person name="Alvarado L."/>
            <person name="Pratt S."/>
            <person name="Kruglyak L."/>
        </authorList>
    </citation>
    <scope>NUCLEOTIDE SEQUENCE [LARGE SCALE GENOMIC DNA]</scope>
    <source>
        <strain>RM11-1a</strain>
    </source>
</reference>
<protein>
    <recommendedName>
        <fullName>Respiratory growth induced protein 1</fullName>
    </recommendedName>
</protein>
<gene>
    <name type="primary">RGI1</name>
    <name type="ORF">SCRG_04542</name>
</gene>
<feature type="chain" id="PRO_0000402293" description="Respiratory growth induced protein 1">
    <location>
        <begin position="1"/>
        <end position="161"/>
    </location>
</feature>
<feature type="cross-link" description="Glycyl lysine isopeptide (Lys-Gly) (interchain with G-Cter in ubiquitin)" evidence="2">
    <location>
        <position position="68"/>
    </location>
</feature>
<dbReference type="EMBL" id="CH408052">
    <property type="protein sequence ID" value="EDV08897.1"/>
    <property type="molecule type" value="Genomic_DNA"/>
</dbReference>
<dbReference type="SMR" id="B3LRI4"/>
<dbReference type="HOGENOM" id="CLU_118207_0_0_1"/>
<dbReference type="OrthoDB" id="15655at4893"/>
<dbReference type="Proteomes" id="UP000008335">
    <property type="component" value="Unassembled WGS sequence"/>
</dbReference>
<dbReference type="GO" id="GO:0005886">
    <property type="term" value="C:plasma membrane"/>
    <property type="evidence" value="ECO:0007669"/>
    <property type="project" value="UniProtKB-SubCell"/>
</dbReference>
<dbReference type="GO" id="GO:0006112">
    <property type="term" value="P:energy reserve metabolic process"/>
    <property type="evidence" value="ECO:0007669"/>
    <property type="project" value="InterPro"/>
</dbReference>
<dbReference type="FunFam" id="3.40.1000.40:FF:000001">
    <property type="entry name" value="Respiratory growth induced protein 2"/>
    <property type="match status" value="1"/>
</dbReference>
<dbReference type="Gene3D" id="3.40.1000.40">
    <property type="entry name" value="Respiratory growth induced protein 1"/>
    <property type="match status" value="1"/>
</dbReference>
<dbReference type="InterPro" id="IPR022554">
    <property type="entry name" value="RGI1"/>
</dbReference>
<dbReference type="InterPro" id="IPR038235">
    <property type="entry name" value="RGI1_sf"/>
</dbReference>
<dbReference type="Pfam" id="PF10843">
    <property type="entry name" value="RGI1"/>
    <property type="match status" value="1"/>
</dbReference>
<comment type="function">
    <text evidence="1">Involved in the control of energetic metabolism and significantly contribute to cell fitness, especially under respiratory growth conditions.</text>
</comment>
<comment type="subcellular location">
    <subcellularLocation>
        <location evidence="1">Cell membrane</location>
        <topology evidence="1">Peripheral membrane protein</topology>
    </subcellularLocation>
</comment>
<comment type="similarity">
    <text evidence="3">Belongs to the RGI1 family.</text>
</comment>
<proteinExistence type="inferred from homology"/>
<organism>
    <name type="scientific">Saccharomyces cerevisiae (strain RM11-1a)</name>
    <name type="common">Baker's yeast</name>
    <dbReference type="NCBI Taxonomy" id="285006"/>
    <lineage>
        <taxon>Eukaryota</taxon>
        <taxon>Fungi</taxon>
        <taxon>Dikarya</taxon>
        <taxon>Ascomycota</taxon>
        <taxon>Saccharomycotina</taxon>
        <taxon>Saccharomycetes</taxon>
        <taxon>Saccharomycetales</taxon>
        <taxon>Saccharomycetaceae</taxon>
        <taxon>Saccharomyces</taxon>
    </lineage>
</organism>